<feature type="chain" id="PRO_0000301646" description="Aspartate carbamoyltransferase catalytic subunit">
    <location>
        <begin position="1"/>
        <end position="308"/>
    </location>
</feature>
<feature type="binding site" evidence="1">
    <location>
        <position position="57"/>
    </location>
    <ligand>
        <name>carbamoyl phosphate</name>
        <dbReference type="ChEBI" id="CHEBI:58228"/>
    </ligand>
</feature>
<feature type="binding site" evidence="1">
    <location>
        <position position="58"/>
    </location>
    <ligand>
        <name>carbamoyl phosphate</name>
        <dbReference type="ChEBI" id="CHEBI:58228"/>
    </ligand>
</feature>
<feature type="binding site" evidence="1">
    <location>
        <position position="86"/>
    </location>
    <ligand>
        <name>L-aspartate</name>
        <dbReference type="ChEBI" id="CHEBI:29991"/>
    </ligand>
</feature>
<feature type="binding site" evidence="1">
    <location>
        <position position="107"/>
    </location>
    <ligand>
        <name>carbamoyl phosphate</name>
        <dbReference type="ChEBI" id="CHEBI:58228"/>
    </ligand>
</feature>
<feature type="binding site" evidence="1">
    <location>
        <position position="135"/>
    </location>
    <ligand>
        <name>carbamoyl phosphate</name>
        <dbReference type="ChEBI" id="CHEBI:58228"/>
    </ligand>
</feature>
<feature type="binding site" evidence="1">
    <location>
        <position position="138"/>
    </location>
    <ligand>
        <name>carbamoyl phosphate</name>
        <dbReference type="ChEBI" id="CHEBI:58228"/>
    </ligand>
</feature>
<feature type="binding site" evidence="1">
    <location>
        <position position="167"/>
    </location>
    <ligand>
        <name>L-aspartate</name>
        <dbReference type="ChEBI" id="CHEBI:29991"/>
    </ligand>
</feature>
<feature type="binding site" evidence="1">
    <location>
        <position position="228"/>
    </location>
    <ligand>
        <name>L-aspartate</name>
        <dbReference type="ChEBI" id="CHEBI:29991"/>
    </ligand>
</feature>
<feature type="binding site" evidence="1">
    <location>
        <position position="267"/>
    </location>
    <ligand>
        <name>carbamoyl phosphate</name>
        <dbReference type="ChEBI" id="CHEBI:58228"/>
    </ligand>
</feature>
<feature type="binding site" evidence="1">
    <location>
        <position position="268"/>
    </location>
    <ligand>
        <name>carbamoyl phosphate</name>
        <dbReference type="ChEBI" id="CHEBI:58228"/>
    </ligand>
</feature>
<keyword id="KW-0665">Pyrimidine biosynthesis</keyword>
<keyword id="KW-0808">Transferase</keyword>
<evidence type="ECO:0000255" key="1">
    <source>
        <dbReference type="HAMAP-Rule" id="MF_00001"/>
    </source>
</evidence>
<proteinExistence type="inferred from homology"/>
<protein>
    <recommendedName>
        <fullName evidence="1">Aspartate carbamoyltransferase catalytic subunit</fullName>
        <ecNumber evidence="1">2.1.3.2</ecNumber>
    </recommendedName>
    <alternativeName>
        <fullName evidence="1">Aspartate transcarbamylase</fullName>
        <shortName evidence="1">ATCase</shortName>
    </alternativeName>
</protein>
<reference key="1">
    <citation type="journal article" date="2009" name="ISME J.">
        <title>The genome sequence of the psychrophilic archaeon, Methanococcoides burtonii: the role of genome evolution in cold adaptation.</title>
        <authorList>
            <person name="Allen M.A."/>
            <person name="Lauro F.M."/>
            <person name="Williams T.J."/>
            <person name="Burg D."/>
            <person name="Siddiqui K.S."/>
            <person name="De Francisci D."/>
            <person name="Chong K.W."/>
            <person name="Pilak O."/>
            <person name="Chew H.H."/>
            <person name="De Maere M.Z."/>
            <person name="Ting L."/>
            <person name="Katrib M."/>
            <person name="Ng C."/>
            <person name="Sowers K.R."/>
            <person name="Galperin M.Y."/>
            <person name="Anderson I.J."/>
            <person name="Ivanova N."/>
            <person name="Dalin E."/>
            <person name="Martinez M."/>
            <person name="Lapidus A."/>
            <person name="Hauser L."/>
            <person name="Land M."/>
            <person name="Thomas T."/>
            <person name="Cavicchioli R."/>
        </authorList>
    </citation>
    <scope>NUCLEOTIDE SEQUENCE [LARGE SCALE GENOMIC DNA]</scope>
    <source>
        <strain>DSM 6242 / NBRC 107633 / OCM 468 / ACE-M</strain>
    </source>
</reference>
<name>PYRB_METBU</name>
<sequence>MSFKDLHIISMKSFSRDMIDHVLNTAEMLEPIAKGKTKSDLLKGKILGVLFFEPSTRTRMSFETAMMRLGGDVLSLGSVDASSIAKGETLADTIRVVNGYANAIVLRHNKEGAAQLASEFSSVPILNAGDGAGHHPTQTFLDLYTIRRESHLDGLKIALAGDLKYGRTVHSLCYALSLYGAEITLVSPKELRLPADIIEDLRSRNIKLTEIEYIEDAIENVDVLYVTRIQKERFPDPAEYRKVANSLLISPELLEKAKPELKVMHPLPRTNEIDPRVDNTKHACYFKQSFYGVPIRMALLALVMGALE</sequence>
<dbReference type="EC" id="2.1.3.2" evidence="1"/>
<dbReference type="EMBL" id="CP000300">
    <property type="protein sequence ID" value="ABE51086.1"/>
    <property type="molecule type" value="Genomic_DNA"/>
</dbReference>
<dbReference type="RefSeq" id="WP_011498250.1">
    <property type="nucleotide sequence ID" value="NC_007955.1"/>
</dbReference>
<dbReference type="SMR" id="Q12ZP0"/>
<dbReference type="STRING" id="259564.Mbur_0065"/>
<dbReference type="GeneID" id="3997193"/>
<dbReference type="KEGG" id="mbu:Mbur_0065"/>
<dbReference type="HOGENOM" id="CLU_043846_1_2_2"/>
<dbReference type="OrthoDB" id="7792at2157"/>
<dbReference type="UniPathway" id="UPA00070">
    <property type="reaction ID" value="UER00116"/>
</dbReference>
<dbReference type="Proteomes" id="UP000001979">
    <property type="component" value="Chromosome"/>
</dbReference>
<dbReference type="GO" id="GO:0005829">
    <property type="term" value="C:cytosol"/>
    <property type="evidence" value="ECO:0007669"/>
    <property type="project" value="TreeGrafter"/>
</dbReference>
<dbReference type="GO" id="GO:0016597">
    <property type="term" value="F:amino acid binding"/>
    <property type="evidence" value="ECO:0007669"/>
    <property type="project" value="InterPro"/>
</dbReference>
<dbReference type="GO" id="GO:0004070">
    <property type="term" value="F:aspartate carbamoyltransferase activity"/>
    <property type="evidence" value="ECO:0007669"/>
    <property type="project" value="UniProtKB-UniRule"/>
</dbReference>
<dbReference type="GO" id="GO:0006207">
    <property type="term" value="P:'de novo' pyrimidine nucleobase biosynthetic process"/>
    <property type="evidence" value="ECO:0007669"/>
    <property type="project" value="InterPro"/>
</dbReference>
<dbReference type="GO" id="GO:0044205">
    <property type="term" value="P:'de novo' UMP biosynthetic process"/>
    <property type="evidence" value="ECO:0007669"/>
    <property type="project" value="UniProtKB-UniRule"/>
</dbReference>
<dbReference type="GO" id="GO:0006520">
    <property type="term" value="P:amino acid metabolic process"/>
    <property type="evidence" value="ECO:0007669"/>
    <property type="project" value="InterPro"/>
</dbReference>
<dbReference type="FunFam" id="3.40.50.1370:FF:000001">
    <property type="entry name" value="Aspartate carbamoyltransferase"/>
    <property type="match status" value="1"/>
</dbReference>
<dbReference type="FunFam" id="3.40.50.1370:FF:000002">
    <property type="entry name" value="Aspartate carbamoyltransferase 2"/>
    <property type="match status" value="1"/>
</dbReference>
<dbReference type="Gene3D" id="3.40.50.1370">
    <property type="entry name" value="Aspartate/ornithine carbamoyltransferase"/>
    <property type="match status" value="2"/>
</dbReference>
<dbReference type="HAMAP" id="MF_00001">
    <property type="entry name" value="Asp_carb_tr"/>
    <property type="match status" value="1"/>
</dbReference>
<dbReference type="InterPro" id="IPR006132">
    <property type="entry name" value="Asp/Orn_carbamoyltranf_P-bd"/>
</dbReference>
<dbReference type="InterPro" id="IPR006130">
    <property type="entry name" value="Asp/Orn_carbamoylTrfase"/>
</dbReference>
<dbReference type="InterPro" id="IPR036901">
    <property type="entry name" value="Asp/Orn_carbamoylTrfase_sf"/>
</dbReference>
<dbReference type="InterPro" id="IPR002082">
    <property type="entry name" value="Asp_carbamoyltransf"/>
</dbReference>
<dbReference type="InterPro" id="IPR006131">
    <property type="entry name" value="Asp_carbamoyltransf_Asp/Orn-bd"/>
</dbReference>
<dbReference type="NCBIfam" id="TIGR00670">
    <property type="entry name" value="asp_carb_tr"/>
    <property type="match status" value="1"/>
</dbReference>
<dbReference type="NCBIfam" id="NF002032">
    <property type="entry name" value="PRK00856.1"/>
    <property type="match status" value="1"/>
</dbReference>
<dbReference type="PANTHER" id="PTHR45753:SF6">
    <property type="entry name" value="ASPARTATE CARBAMOYLTRANSFERASE"/>
    <property type="match status" value="1"/>
</dbReference>
<dbReference type="PANTHER" id="PTHR45753">
    <property type="entry name" value="ORNITHINE CARBAMOYLTRANSFERASE, MITOCHONDRIAL"/>
    <property type="match status" value="1"/>
</dbReference>
<dbReference type="Pfam" id="PF00185">
    <property type="entry name" value="OTCace"/>
    <property type="match status" value="1"/>
</dbReference>
<dbReference type="Pfam" id="PF02729">
    <property type="entry name" value="OTCace_N"/>
    <property type="match status" value="1"/>
</dbReference>
<dbReference type="PRINTS" id="PR00100">
    <property type="entry name" value="AOTCASE"/>
</dbReference>
<dbReference type="PRINTS" id="PR00101">
    <property type="entry name" value="ATCASE"/>
</dbReference>
<dbReference type="SUPFAM" id="SSF53671">
    <property type="entry name" value="Aspartate/ornithine carbamoyltransferase"/>
    <property type="match status" value="1"/>
</dbReference>
<dbReference type="PROSITE" id="PS00097">
    <property type="entry name" value="CARBAMOYLTRANSFERASE"/>
    <property type="match status" value="1"/>
</dbReference>
<comment type="function">
    <text evidence="1">Catalyzes the condensation of carbamoyl phosphate and aspartate to form carbamoyl aspartate and inorganic phosphate, the committed step in the de novo pyrimidine nucleotide biosynthesis pathway.</text>
</comment>
<comment type="catalytic activity">
    <reaction evidence="1">
        <text>carbamoyl phosphate + L-aspartate = N-carbamoyl-L-aspartate + phosphate + H(+)</text>
        <dbReference type="Rhea" id="RHEA:20013"/>
        <dbReference type="ChEBI" id="CHEBI:15378"/>
        <dbReference type="ChEBI" id="CHEBI:29991"/>
        <dbReference type="ChEBI" id="CHEBI:32814"/>
        <dbReference type="ChEBI" id="CHEBI:43474"/>
        <dbReference type="ChEBI" id="CHEBI:58228"/>
        <dbReference type="EC" id="2.1.3.2"/>
    </reaction>
</comment>
<comment type="pathway">
    <text evidence="1">Pyrimidine metabolism; UMP biosynthesis via de novo pathway; (S)-dihydroorotate from bicarbonate: step 2/3.</text>
</comment>
<comment type="subunit">
    <text evidence="1">Heterooligomer of catalytic and regulatory chains.</text>
</comment>
<comment type="similarity">
    <text evidence="1">Belongs to the aspartate/ornithine carbamoyltransferase superfamily. ATCase family.</text>
</comment>
<accession>Q12ZP0</accession>
<gene>
    <name evidence="1" type="primary">pyrB</name>
    <name type="ordered locus">Mbur_0065</name>
</gene>
<organism>
    <name type="scientific">Methanococcoides burtonii (strain DSM 6242 / NBRC 107633 / OCM 468 / ACE-M)</name>
    <dbReference type="NCBI Taxonomy" id="259564"/>
    <lineage>
        <taxon>Archaea</taxon>
        <taxon>Methanobacteriati</taxon>
        <taxon>Methanobacteriota</taxon>
        <taxon>Stenosarchaea group</taxon>
        <taxon>Methanomicrobia</taxon>
        <taxon>Methanosarcinales</taxon>
        <taxon>Methanosarcinaceae</taxon>
        <taxon>Methanococcoides</taxon>
    </lineage>
</organism>